<organism>
    <name type="scientific">Prochlorococcus marinus (strain MIT 9313)</name>
    <dbReference type="NCBI Taxonomy" id="74547"/>
    <lineage>
        <taxon>Bacteria</taxon>
        <taxon>Bacillati</taxon>
        <taxon>Cyanobacteriota</taxon>
        <taxon>Cyanophyceae</taxon>
        <taxon>Synechococcales</taxon>
        <taxon>Prochlorococcaceae</taxon>
        <taxon>Prochlorococcus</taxon>
    </lineage>
</organism>
<keyword id="KW-0004">4Fe-4S</keyword>
<keyword id="KW-0148">Chlorophyll</keyword>
<keyword id="KW-0157">Chromophore</keyword>
<keyword id="KW-0249">Electron transport</keyword>
<keyword id="KW-0408">Iron</keyword>
<keyword id="KW-0411">Iron-sulfur</keyword>
<keyword id="KW-0460">Magnesium</keyword>
<keyword id="KW-0472">Membrane</keyword>
<keyword id="KW-0479">Metal-binding</keyword>
<keyword id="KW-0560">Oxidoreductase</keyword>
<keyword id="KW-0602">Photosynthesis</keyword>
<keyword id="KW-0603">Photosystem I</keyword>
<keyword id="KW-1185">Reference proteome</keyword>
<keyword id="KW-0793">Thylakoid</keyword>
<keyword id="KW-0812">Transmembrane</keyword>
<keyword id="KW-1133">Transmembrane helix</keyword>
<keyword id="KW-0813">Transport</keyword>
<dbReference type="EC" id="1.97.1.12" evidence="1"/>
<dbReference type="EMBL" id="BX548175">
    <property type="protein sequence ID" value="CAE21944.1"/>
    <property type="molecule type" value="Genomic_DNA"/>
</dbReference>
<dbReference type="RefSeq" id="WP_011131136.1">
    <property type="nucleotide sequence ID" value="NC_005071.1"/>
</dbReference>
<dbReference type="SMR" id="Q7V511"/>
<dbReference type="KEGG" id="pmt:PMT_1769"/>
<dbReference type="eggNOG" id="COG2885">
    <property type="taxonomic scope" value="Bacteria"/>
</dbReference>
<dbReference type="HOGENOM" id="CLU_016126_1_0_3"/>
<dbReference type="OrthoDB" id="499313at2"/>
<dbReference type="Proteomes" id="UP000001423">
    <property type="component" value="Chromosome"/>
</dbReference>
<dbReference type="GO" id="GO:0009522">
    <property type="term" value="C:photosystem I"/>
    <property type="evidence" value="ECO:0007669"/>
    <property type="project" value="UniProtKB-KW"/>
</dbReference>
<dbReference type="GO" id="GO:0031676">
    <property type="term" value="C:plasma membrane-derived thylakoid membrane"/>
    <property type="evidence" value="ECO:0007669"/>
    <property type="project" value="UniProtKB-SubCell"/>
</dbReference>
<dbReference type="GO" id="GO:0051539">
    <property type="term" value="F:4 iron, 4 sulfur cluster binding"/>
    <property type="evidence" value="ECO:0007669"/>
    <property type="project" value="UniProtKB-KW"/>
</dbReference>
<dbReference type="GO" id="GO:0016168">
    <property type="term" value="F:chlorophyll binding"/>
    <property type="evidence" value="ECO:0007669"/>
    <property type="project" value="UniProtKB-KW"/>
</dbReference>
<dbReference type="GO" id="GO:0009055">
    <property type="term" value="F:electron transfer activity"/>
    <property type="evidence" value="ECO:0007669"/>
    <property type="project" value="UniProtKB-UniRule"/>
</dbReference>
<dbReference type="GO" id="GO:0000287">
    <property type="term" value="F:magnesium ion binding"/>
    <property type="evidence" value="ECO:0007669"/>
    <property type="project" value="UniProtKB-UniRule"/>
</dbReference>
<dbReference type="GO" id="GO:0016491">
    <property type="term" value="F:oxidoreductase activity"/>
    <property type="evidence" value="ECO:0007669"/>
    <property type="project" value="UniProtKB-KW"/>
</dbReference>
<dbReference type="GO" id="GO:0015979">
    <property type="term" value="P:photosynthesis"/>
    <property type="evidence" value="ECO:0007669"/>
    <property type="project" value="UniProtKB-UniRule"/>
</dbReference>
<dbReference type="FunFam" id="1.20.1130.10:FF:000001">
    <property type="entry name" value="Photosystem I P700 chlorophyll a apoprotein A2"/>
    <property type="match status" value="1"/>
</dbReference>
<dbReference type="Gene3D" id="1.20.1130.10">
    <property type="entry name" value="Photosystem I PsaA/PsaB"/>
    <property type="match status" value="1"/>
</dbReference>
<dbReference type="HAMAP" id="MF_00482">
    <property type="entry name" value="PSI_PsaB"/>
    <property type="match status" value="1"/>
</dbReference>
<dbReference type="InterPro" id="IPR001280">
    <property type="entry name" value="PSI_PsaA/B"/>
</dbReference>
<dbReference type="InterPro" id="IPR020586">
    <property type="entry name" value="PSI_PsaA/B_CS"/>
</dbReference>
<dbReference type="InterPro" id="IPR036408">
    <property type="entry name" value="PSI_PsaA/B_sf"/>
</dbReference>
<dbReference type="InterPro" id="IPR006244">
    <property type="entry name" value="PSI_PsaB"/>
</dbReference>
<dbReference type="NCBIfam" id="TIGR01336">
    <property type="entry name" value="psaB"/>
    <property type="match status" value="1"/>
</dbReference>
<dbReference type="PANTHER" id="PTHR30128">
    <property type="entry name" value="OUTER MEMBRANE PROTEIN, OMPA-RELATED"/>
    <property type="match status" value="1"/>
</dbReference>
<dbReference type="PANTHER" id="PTHR30128:SF19">
    <property type="entry name" value="PHOTOSYSTEM I P700 CHLOROPHYLL A APOPROTEIN A1-RELATED"/>
    <property type="match status" value="1"/>
</dbReference>
<dbReference type="Pfam" id="PF00223">
    <property type="entry name" value="PsaA_PsaB"/>
    <property type="match status" value="1"/>
</dbReference>
<dbReference type="PIRSF" id="PIRSF002905">
    <property type="entry name" value="PSI_A"/>
    <property type="match status" value="1"/>
</dbReference>
<dbReference type="PRINTS" id="PR00257">
    <property type="entry name" value="PHOTSYSPSAAB"/>
</dbReference>
<dbReference type="SUPFAM" id="SSF81558">
    <property type="entry name" value="Photosystem I subunits PsaA/PsaB"/>
    <property type="match status" value="1"/>
</dbReference>
<dbReference type="PROSITE" id="PS00419">
    <property type="entry name" value="PHOTOSYSTEM_I_PSAAB"/>
    <property type="match status" value="1"/>
</dbReference>
<feature type="chain" id="PRO_0000088648" description="Photosystem I P700 chlorophyll a apoprotein A2">
    <location>
        <begin position="1"/>
        <end position="749"/>
    </location>
</feature>
<feature type="transmembrane region" description="Helical; Name=I" evidence="1">
    <location>
        <begin position="46"/>
        <end position="69"/>
    </location>
</feature>
<feature type="transmembrane region" description="Helical; Name=II" evidence="1">
    <location>
        <begin position="135"/>
        <end position="158"/>
    </location>
</feature>
<feature type="transmembrane region" description="Helical; Name=III" evidence="1">
    <location>
        <begin position="175"/>
        <end position="199"/>
    </location>
</feature>
<feature type="transmembrane region" description="Helical; Name=IV" evidence="1">
    <location>
        <begin position="273"/>
        <end position="291"/>
    </location>
</feature>
<feature type="transmembrane region" description="Helical; Name=V" evidence="1">
    <location>
        <begin position="343"/>
        <end position="366"/>
    </location>
</feature>
<feature type="transmembrane region" description="Helical; Name=VI" evidence="1">
    <location>
        <begin position="382"/>
        <end position="408"/>
    </location>
</feature>
<feature type="transmembrane region" description="Helical; Name=VII" evidence="1">
    <location>
        <begin position="430"/>
        <end position="452"/>
    </location>
</feature>
<feature type="transmembrane region" description="Helical; Name=VIII" evidence="1">
    <location>
        <begin position="532"/>
        <end position="550"/>
    </location>
</feature>
<feature type="transmembrane region" description="Helical; Name=IX" evidence="1">
    <location>
        <begin position="590"/>
        <end position="611"/>
    </location>
</feature>
<feature type="transmembrane region" description="Helical; Name=X" evidence="1">
    <location>
        <begin position="658"/>
        <end position="680"/>
    </location>
</feature>
<feature type="transmembrane region" description="Helical; Name=XI" evidence="1">
    <location>
        <begin position="722"/>
        <end position="742"/>
    </location>
</feature>
<feature type="binding site" evidence="1">
    <location>
        <position position="574"/>
    </location>
    <ligand>
        <name>[4Fe-4S] cluster</name>
        <dbReference type="ChEBI" id="CHEBI:49883"/>
        <note>ligand shared between dimeric partners</note>
    </ligand>
</feature>
<feature type="binding site" evidence="1">
    <location>
        <position position="583"/>
    </location>
    <ligand>
        <name>[4Fe-4S] cluster</name>
        <dbReference type="ChEBI" id="CHEBI:49883"/>
        <note>ligand shared between dimeric partners</note>
    </ligand>
</feature>
<feature type="binding site" description="axial binding residue" evidence="1">
    <location>
        <position position="669"/>
    </location>
    <ligand>
        <name>divinyl chlorophyll a</name>
        <dbReference type="ChEBI" id="CHEBI:73095"/>
        <label>B1</label>
    </ligand>
    <ligandPart>
        <name>Mg</name>
        <dbReference type="ChEBI" id="CHEBI:25107"/>
    </ligandPart>
</feature>
<feature type="binding site" description="axial binding residue" evidence="1">
    <location>
        <position position="677"/>
    </location>
    <ligand>
        <name>divinyl chlorophyll a</name>
        <dbReference type="ChEBI" id="CHEBI:73095"/>
        <label>B3</label>
    </ligand>
    <ligandPart>
        <name>Mg</name>
        <dbReference type="ChEBI" id="CHEBI:25107"/>
    </ligandPart>
</feature>
<feature type="binding site" evidence="1">
    <location>
        <position position="685"/>
    </location>
    <ligand>
        <name>divinyl chlorophyll a</name>
        <dbReference type="ChEBI" id="CHEBI:73095"/>
        <label>B3</label>
    </ligand>
</feature>
<feature type="binding site" evidence="1">
    <location>
        <position position="686"/>
    </location>
    <ligand>
        <name>phylloquinone</name>
        <dbReference type="ChEBI" id="CHEBI:18067"/>
        <label>B</label>
    </ligand>
</feature>
<proteinExistence type="inferred from homology"/>
<gene>
    <name evidence="1" type="primary">psaB</name>
    <name type="ordered locus">PMT_1769</name>
</gene>
<name>PSAB_PROMM</name>
<reference key="1">
    <citation type="journal article" date="2003" name="Nature">
        <title>Genome divergence in two Prochlorococcus ecotypes reflects oceanic niche differentiation.</title>
        <authorList>
            <person name="Rocap G."/>
            <person name="Larimer F.W."/>
            <person name="Lamerdin J.E."/>
            <person name="Malfatti S."/>
            <person name="Chain P."/>
            <person name="Ahlgren N.A."/>
            <person name="Arellano A."/>
            <person name="Coleman M."/>
            <person name="Hauser L."/>
            <person name="Hess W.R."/>
            <person name="Johnson Z.I."/>
            <person name="Land M.L."/>
            <person name="Lindell D."/>
            <person name="Post A.F."/>
            <person name="Regala W."/>
            <person name="Shah M."/>
            <person name="Shaw S.L."/>
            <person name="Steglich C."/>
            <person name="Sullivan M.B."/>
            <person name="Ting C.S."/>
            <person name="Tolonen A."/>
            <person name="Webb E.A."/>
            <person name="Zinser E.R."/>
            <person name="Chisholm S.W."/>
        </authorList>
    </citation>
    <scope>NUCLEOTIDE SEQUENCE [LARGE SCALE GENOMIC DNA]</scope>
    <source>
        <strain>MIT 9313</strain>
    </source>
</reference>
<accession>Q7V511</accession>
<protein>
    <recommendedName>
        <fullName evidence="1">Photosystem I P700 chlorophyll a apoprotein A2</fullName>
        <ecNumber evidence="1">1.97.1.12</ecNumber>
    </recommendedName>
    <alternativeName>
        <fullName evidence="1">PsaB</fullName>
    </alternativeName>
</protein>
<evidence type="ECO:0000255" key="1">
    <source>
        <dbReference type="HAMAP-Rule" id="MF_00482"/>
    </source>
</evidence>
<comment type="function">
    <text evidence="1">PsaA and PsaB bind P700, the primary electron donor of photosystem I (PSI), as well as the electron acceptors A0, A1 and FX. PSI is a plastocyanin/cytochrome c6-ferredoxin oxidoreductase, converting photonic excitation into a charge separation, which transfers an electron from the donor P700 chlorophyll pair to the spectroscopically characterized acceptors A0, A1, FX, FA and FB in turn. Oxidized P700 is reduced on the lumenal side of the thylakoid membrane by plastocyanin or cytochrome c6.</text>
</comment>
<comment type="catalytic activity">
    <reaction evidence="1">
        <text>reduced [plastocyanin] + hnu + oxidized [2Fe-2S]-[ferredoxin] = oxidized [plastocyanin] + reduced [2Fe-2S]-[ferredoxin]</text>
        <dbReference type="Rhea" id="RHEA:30407"/>
        <dbReference type="Rhea" id="RHEA-COMP:10000"/>
        <dbReference type="Rhea" id="RHEA-COMP:10001"/>
        <dbReference type="Rhea" id="RHEA-COMP:10039"/>
        <dbReference type="Rhea" id="RHEA-COMP:10040"/>
        <dbReference type="ChEBI" id="CHEBI:29036"/>
        <dbReference type="ChEBI" id="CHEBI:30212"/>
        <dbReference type="ChEBI" id="CHEBI:33737"/>
        <dbReference type="ChEBI" id="CHEBI:33738"/>
        <dbReference type="ChEBI" id="CHEBI:49552"/>
        <dbReference type="EC" id="1.97.1.12"/>
    </reaction>
</comment>
<comment type="cofactor">
    <text evidence="1">PSI electron transfer chain: 5 divinyl chlorophyll a, 1 divinyl chlorophyll a', 2 phylloquinones and 3 4Fe-4S clusters. PSI core antenna: 90 divinyl chlorophyll a, 22 carotenoids, 3 phospholipids and 1 galactolipid. P700 is a divinyl chlorophyll a/divinyl chlorophyll a' dimer, A0 is one or more divinyl chlorophyll a, A1 is one or both phylloquinones and FX is a shared 4Fe-4S iron-sulfur center.</text>
</comment>
<comment type="subunit">
    <text evidence="1">The PsaA/B heterodimer binds the P700 chlorophyll special pair and subsequent electron acceptors. PSI consists of a core antenna complex that captures photons, and an electron transfer chain that converts photonic excitation into a charge separation. The cyanobacterial PSI reaction center is composed of one copy each of PsaA,B,C,D,E,F,I,J,K,L,M and X, and forms trimeric complexes.</text>
</comment>
<comment type="subcellular location">
    <subcellularLocation>
        <location evidence="1">Cellular thylakoid membrane</location>
        <topology evidence="1">Multi-pass membrane protein</topology>
    </subcellularLocation>
</comment>
<comment type="similarity">
    <text evidence="1">Belongs to the PsaA/PsaB family.</text>
</comment>
<sequence length="749" mass="83232">MATKFPSFSQGLAQDPTTRRIWYGIATAHDFESHDGMTEERLYQKLFSTHFGHLAVIGLWVAGNLFHIAWQGNFEQWVADPQNVQPIAHAIWDPHFGQGITDALTQAGASRPVNICYSGLYHWWYTIGMRTNTELYQGAIFIDILVAWLLFGGWLHLQPKFRPSLAWFKNAEAMMNHHLAVLFGFTNIAWTGHLVHVAIPESRGQHVGWDNFLTVLPHPEGLTPFFTGNWGAYAQNPDSLNHAFGTSEGAGTAILTFLGGVHPQSGALWLTDISHHHIAIGVFMIIGGHMYRNSFGIGHTFKEITDGHNTNHPNDPHKDGFREKIGHYGLNHNGITDTINNSLHFQLGLALACLGTAASLVAHHMGALPSYAFIAQDYTTQAALYTHHQYIAIFLMCGAFSHGAIFFVRDYDPEANKDNVLARVLETKEALISHLSWVCMLLGFHTLALYLHNDVVIAFGTPEKQILVEPIFAQFIQAASGKVMYGLDVLLANANSAPSLAAAGMPGDHYWMDLINASPEVSNFMPIGPGDFLVHHGIALGLHTTALILIKGALDARGSKLMPDKKDFGYAFACDGPGRGGTCDISAWDSTYMAIFWALNTIAWATYYWHWKHLAAWQGNMAQFNESSTHLMGWFRDYLWINSSQIINGYNPFGINNLSPWAYMFLAGHLVWATGFMFLISWRGYWQELIETLVWAHQRSPIANLVGWRDKPVALSIVQARLVGVTHFAVGNIFTFGAFVIASTASKFG</sequence>